<feature type="chain" id="PRO_0000219371" description="TSC22 domain family protein 3">
    <location>
        <begin position="1"/>
        <end position="137"/>
    </location>
</feature>
<feature type="region of interest" description="AP1-binding">
    <location>
        <begin position="1"/>
        <end position="60"/>
    </location>
</feature>
<feature type="region of interest" description="Leucine-zipper">
    <location>
        <begin position="76"/>
        <end position="97"/>
    </location>
</feature>
<feature type="region of interest" description="Disordered" evidence="2">
    <location>
        <begin position="101"/>
        <end position="137"/>
    </location>
</feature>
<feature type="compositionally biased region" description="Low complexity" evidence="2">
    <location>
        <begin position="128"/>
        <end position="137"/>
    </location>
</feature>
<feature type="modified residue" description="Phosphoserine" evidence="1">
    <location>
        <position position="102"/>
    </location>
</feature>
<feature type="modified residue" description="Phosphothreonine" evidence="17">
    <location>
        <position position="125"/>
    </location>
</feature>
<feature type="modified residue" description="Phosphothreonine" evidence="17">
    <location>
        <position position="128"/>
    </location>
</feature>
<feature type="splice variant" id="VSP_012690" description="In isoform 2." evidence="13 14">
    <location>
        <begin position="1"/>
        <end position="57"/>
    </location>
</feature>
<feature type="splice variant" id="VSP_012691" description="In isoform 3." evidence="14">
    <original>MNTEMYQTPMEVAVYQLHNFSISFFSSLLGGDVVSVKLDN</original>
    <variation>MAQPKTECRSPVGLDCCNCCLDLANRCELQKEKSGESPGSPFVSNFRQLQEKLVFENLNTDKLNNIMRQDSMEPVVRDPCYLINEGICNRNIDQTMLSILLFFH</variation>
    <location>
        <begin position="1"/>
        <end position="40"/>
    </location>
</feature>
<feature type="splice variant" id="VSP_055016" description="In isoform 4." evidence="12">
    <original>MNTEMYQTPMEVAVYQLHNFSISFFSSLLGGDVVSVKLDN</original>
    <variation>MESQKASSAGAHLPAAPDLPEQAAAAAASKPEKMAQPKTECRSPVGLDCCNCCLDLANRCELQKEKSGESPGSPFVSNFRQLQEKLVFENLNTDKLNNIMRQDSMEPVVRDPCYLINEGICNRNIDQTMLSILLFFH</variation>
    <location>
        <begin position="1"/>
        <end position="40"/>
    </location>
</feature>
<feature type="sequence conflict" description="In Ref. 1; AAD01789." evidence="15" ref="1">
    <original>I</original>
    <variation>T</variation>
    <location>
        <position position="22"/>
    </location>
</feature>
<feature type="sequence conflict" description="In Ref. 3; AAG41221." evidence="15" ref="3">
    <original>V</original>
    <variation>L</variation>
    <location>
        <position position="33"/>
    </location>
</feature>
<feature type="modified residue" description="Phosphoserine" evidence="17">
    <location sequence="Q9Z2S7-3">
        <position position="40"/>
    </location>
</feature>
<feature type="modified residue" description="Phosphoserine" evidence="17">
    <location sequence="Q9Z2S7-4">
        <position position="73"/>
    </location>
</feature>
<comment type="function">
    <text evidence="1 3 9">Protects T-cells from IL2 deprivation-induced apoptosis through the inhibition of FOXO3A transcriptional activity that leads to the down-regulation of the pro-apoptotic factor BCL2L11 (PubMed:26752201). In macrophages, plays a role in the anti-inflammatory and immunosuppressive effects of glucocorticoids and IL10 (By similarity). In T-cells, inhibits anti-CD3-induced NFKB1 nuclear translocation and thereby NFKB1 DNA-binding activities (By similarity). In vitro, suppresses AP-1 transcription factor complex DNA-binding activities (PubMed:11397794).</text>
</comment>
<comment type="function">
    <molecule>Isoform 1</molecule>
    <text evidence="8">Inhibits myogenic differentiation and mediates anti-myogenic effects of glucocorticoids by binding and regulating MYOD1 and HDAC1 transcriptional activity resulting in reduced expression of MYOG.</text>
</comment>
<comment type="function">
    <molecule>Isoform 4</molecule>
    <text evidence="8">Inhibits myogenic differentiation and mediates anti-myogenic effects of glucocorticoids by binding and regulating MYOD1 and HDAC1 transcriptional activity resulting in reduced expression of MYOG.</text>
</comment>
<comment type="subunit">
    <text evidence="1 3">Can form homodimers, however it is likely to function as a monomer (PubMed:11397794). Interacts with NFKB1 (By similarity). Interacts (via N-terminus) with JUN and FOS; these interactions inhibit the binding of active AP1 to its target DNA (PubMed:11397794).</text>
</comment>
<comment type="subunit">
    <molecule>Isoform 1</molecule>
    <text evidence="8">Interacts with MYOD1 (PubMed:20124407). Interacts with HDAC1; this interaction affects HDAC1 activity on MYOG promoter and thus inhibits MYOD1 transcriptional activity (PubMed:20124407).</text>
</comment>
<comment type="subunit">
    <molecule>Isoform 4</molecule>
    <text evidence="8">Interacts with MYOD1.</text>
</comment>
<comment type="interaction">
    <interactant intactId="EBI-15771036">
        <id>Q9Z2S7-3</id>
    </interactant>
    <interactant intactId="EBI-8046183">
        <id>Q8CFI0</id>
        <label>Nedd4l</label>
    </interactant>
    <organismsDiffer>false</organismsDiffer>
    <experiments>2</experiments>
</comment>
<comment type="interaction">
    <interactant intactId="EBI-15771036">
        <id>Q9Z2S7-3</id>
    </interactant>
    <interactant intactId="EBI-397757">
        <id>Q99N57</id>
        <label>Raf1</label>
    </interactant>
    <organismsDiffer>false</organismsDiffer>
    <experiments>2</experiments>
</comment>
<comment type="interaction">
    <interactant intactId="EBI-15771036">
        <id>Q9Z2S7-3</id>
    </interactant>
    <interactant intactId="EBI-15591730">
        <id>Q9WVC6</id>
        <label>Sgk1</label>
    </interactant>
    <organismsDiffer>false</organismsDiffer>
    <experiments>2</experiments>
</comment>
<comment type="subcellular location">
    <molecule>Isoform 1</molecule>
    <subcellularLocation>
        <location evidence="8">Cytoplasm</location>
    </subcellularLocation>
    <subcellularLocation>
        <location evidence="8">Nucleus</location>
    </subcellularLocation>
    <text evidence="8">Localization depends on differentiation status of myoblasts (PubMed:20124407). In undifferentiated myoblasts; localizes to the cytoplasm, but in differentiating myoblast; localizes to the nucleus (PubMed:20124407).</text>
</comment>
<comment type="subcellular location">
    <molecule>Isoform 4</molecule>
    <subcellularLocation>
        <location evidence="8">Cytoplasm</location>
    </subcellularLocation>
    <subcellularLocation>
        <location evidence="8">Nucleus</location>
    </subcellularLocation>
    <text evidence="8">Localization depends on differentiation status of myoblasts (PubMed:20124407). In undifferentiated myoblasts; localizes to the cytoplasm, but in differentiating myoblasts; localizes to the nucleus (PubMed:20124407).</text>
</comment>
<comment type="alternative products">
    <event type="alternative splicing"/>
    <isoform>
        <id>Q9Z2S7-1</id>
        <name>1</name>
        <name>Tilz3b</name>
        <name evidence="11">TSC22D3-2</name>
        <sequence type="displayed"/>
    </isoform>
    <isoform>
        <id>Q9Z2S7-2</id>
        <name>2</name>
        <name>Tilz3a</name>
        <sequence type="described" ref="VSP_012690"/>
    </isoform>
    <isoform>
        <id>Q9Z2S7-3</id>
        <name>3</name>
        <name>Tilz3c</name>
        <name evidence="11">TSC22D3-1</name>
        <sequence type="described" ref="VSP_012691"/>
    </isoform>
    <isoform>
        <id>Q9Z2S7-4</id>
        <name>4</name>
        <name>Long Gilz</name>
        <name>L-Gilz</name>
        <sequence type="described" ref="VSP_055016"/>
    </isoform>
</comment>
<comment type="tissue specificity">
    <text evidence="4 5 9 10">Expressed in T-cells (PubMed:26752201). Expression inversely correlates with T-cell activation, being higher in resting cells and lower in cells activated by TCR/CD3 triggering (at protein level) (PubMed:11468175). Constitutively expressed in lung, intestine, kidney and liver, most probably by resident cells from the macrophage lineage (PubMed:12393603). Expressed in thymus, lymph nodes, bone marrow, spleen, lung and skeletal muscle (PubMed:9430225).</text>
</comment>
<comment type="tissue specificity">
    <molecule>Isoform 1</molecule>
    <text evidence="7 8">Expressed in spleen and skeletal muscle (at protein level) (PubMed:20124407). Expressed in the cortex, medulla and papilla of the kidney (PubMed:17147695).</text>
</comment>
<comment type="tissue specificity">
    <molecule>Isoform 3</molecule>
    <text evidence="7">Expressed in the cortex, medulla and papilla of the kidney.</text>
</comment>
<comment type="tissue specificity">
    <molecule>Isoform 4</molecule>
    <text evidence="8">Expressed in spleen and skeletal muscle (at protein level).</text>
</comment>
<comment type="developmental stage">
    <molecule>Isoform 1</molecule>
    <text evidence="8">Expressed in differentiating myoblasts at a time of myotube formation.</text>
</comment>
<comment type="developmental stage">
    <molecule>Isoform 4</molecule>
    <text evidence="8">Expressed in differentiating myoblasts at a time of myotube formation.</text>
</comment>
<comment type="induction">
    <text evidence="5 6 9 10">Induced by dexamethasone in lymphoid cells (PubMed:12393603, PubMed:9430225). Induced by Il4, Il10 and Il13 expression in monocyte/macrophage cells (PubMed:12393603). Transiently induced by Il2 deprivation in T-cells.</text>
</comment>
<comment type="induction">
    <molecule>Isoform 1</molecule>
    <text evidence="7 8">Induced by renal hyperosmotic stress and aldosterone (PubMed:17147695). Induced by the synthetic glucocorticoid dexamethasone in differentiating myoblasts (PubMed:20124407).</text>
</comment>
<comment type="induction">
    <molecule>Isoform 3</molecule>
    <text evidence="7">Induced by aldosterone.</text>
</comment>
<comment type="induction">
    <molecule>Isoform 4</molecule>
    <text evidence="8">Induced by the synthetic glucocorticoid dexamethasone in differentiating myoblasts.</text>
</comment>
<comment type="domain">
    <text evidence="3">The leucine-zipper is involved in homodimerization.</text>
</comment>
<comment type="similarity">
    <text evidence="15">Belongs to the TSC-22/Dip/Bun family.</text>
</comment>
<reference key="1">
    <citation type="journal article" date="1997" name="Immunity">
        <title>A new dexamethasone-induced gene of the leucine zipper family protects T lymphocytes from TCR/CD3-activated cell death.</title>
        <authorList>
            <person name="D'Adamio F."/>
            <person name="Zollo O."/>
            <person name="Moraca R."/>
            <person name="Ayroldi E."/>
            <person name="Bruscoli S."/>
            <person name="Bartoli A."/>
            <person name="Cannarile L."/>
            <person name="Migliorati G."/>
            <person name="Riccardi C."/>
        </authorList>
    </citation>
    <scope>NUCLEOTIDE SEQUENCE [MRNA] (ISOFORMS 1 AND 2)</scope>
    <scope>TISSUE SPECIFICITY</scope>
    <scope>INDUCTION BY DEXAMETHASONE</scope>
    <source>
        <strain>C3H/HeN</strain>
        <tissue>Thymus</tissue>
    </source>
</reference>
<reference key="2">
    <citation type="journal article" date="2010" name="J. Biol. Chem.">
        <title>Glucocorticoid-induced leucine zipper (GILZ) and long GILZ inhibit myogenic differentiation and mediate anti-myogenic effects of glucocorticoids.</title>
        <authorList>
            <person name="Bruscoli S."/>
            <person name="Donato V."/>
            <person name="Velardi E."/>
            <person name="Di Sante M."/>
            <person name="Migliorati G."/>
            <person name="Donato R."/>
            <person name="Riccardi C."/>
        </authorList>
    </citation>
    <scope>NUCLEOTIDE SEQUENCE [MRNA] (ISOFORM 4)</scope>
    <scope>FUNCTION (ISOFORMS 1 AND 4)</scope>
    <scope>INTERACTION WITH MYOD1 AND HDAC1 (ISOFORM 1)</scope>
    <scope>INTERACTION WITH MYOD1 (ISOFORM 4)</scope>
    <scope>SUBCELLULAR LOCATION (ISOFORMS 1 AND 4)</scope>
    <scope>TISSUE SPECIFICITY (ISOFORMS 1 AND 4)</scope>
    <scope>DEVELOPMENTAL STAGE (ISOFORMS 1 AND 4)</scope>
    <scope>INDUCTION BY DEXAMETHASONE (ISOFORMS 1 AND 4)</scope>
    <source>
        <strain>DBA/2J</strain>
        <tissue>Myoblast</tissue>
    </source>
</reference>
<reference key="3">
    <citation type="submission" date="1999-11" db="EMBL/GenBank/DDBJ databases">
        <title>Identification and characterization of a family of leucine zipper genes related to TSC22.</title>
        <authorList>
            <person name="Ershler M.A."/>
            <person name="Belyavsky A.V."/>
            <person name="Visser J.W.M."/>
        </authorList>
    </citation>
    <scope>NUCLEOTIDE SEQUENCE [MRNA] (ISOFORMS 1; 2 AND 3)</scope>
</reference>
<reference key="4">
    <citation type="journal article" date="2005" name="Science">
        <title>The transcriptional landscape of the mammalian genome.</title>
        <authorList>
            <person name="Carninci P."/>
            <person name="Kasukawa T."/>
            <person name="Katayama S."/>
            <person name="Gough J."/>
            <person name="Frith M.C."/>
            <person name="Maeda N."/>
            <person name="Oyama R."/>
            <person name="Ravasi T."/>
            <person name="Lenhard B."/>
            <person name="Wells C."/>
            <person name="Kodzius R."/>
            <person name="Shimokawa K."/>
            <person name="Bajic V.B."/>
            <person name="Brenner S.E."/>
            <person name="Batalov S."/>
            <person name="Forrest A.R."/>
            <person name="Zavolan M."/>
            <person name="Davis M.J."/>
            <person name="Wilming L.G."/>
            <person name="Aidinis V."/>
            <person name="Allen J.E."/>
            <person name="Ambesi-Impiombato A."/>
            <person name="Apweiler R."/>
            <person name="Aturaliya R.N."/>
            <person name="Bailey T.L."/>
            <person name="Bansal M."/>
            <person name="Baxter L."/>
            <person name="Beisel K.W."/>
            <person name="Bersano T."/>
            <person name="Bono H."/>
            <person name="Chalk A.M."/>
            <person name="Chiu K.P."/>
            <person name="Choudhary V."/>
            <person name="Christoffels A."/>
            <person name="Clutterbuck D.R."/>
            <person name="Crowe M.L."/>
            <person name="Dalla E."/>
            <person name="Dalrymple B.P."/>
            <person name="de Bono B."/>
            <person name="Della Gatta G."/>
            <person name="di Bernardo D."/>
            <person name="Down T."/>
            <person name="Engstrom P."/>
            <person name="Fagiolini M."/>
            <person name="Faulkner G."/>
            <person name="Fletcher C.F."/>
            <person name="Fukushima T."/>
            <person name="Furuno M."/>
            <person name="Futaki S."/>
            <person name="Gariboldi M."/>
            <person name="Georgii-Hemming P."/>
            <person name="Gingeras T.R."/>
            <person name="Gojobori T."/>
            <person name="Green R.E."/>
            <person name="Gustincich S."/>
            <person name="Harbers M."/>
            <person name="Hayashi Y."/>
            <person name="Hensch T.K."/>
            <person name="Hirokawa N."/>
            <person name="Hill D."/>
            <person name="Huminiecki L."/>
            <person name="Iacono M."/>
            <person name="Ikeo K."/>
            <person name="Iwama A."/>
            <person name="Ishikawa T."/>
            <person name="Jakt M."/>
            <person name="Kanapin A."/>
            <person name="Katoh M."/>
            <person name="Kawasawa Y."/>
            <person name="Kelso J."/>
            <person name="Kitamura H."/>
            <person name="Kitano H."/>
            <person name="Kollias G."/>
            <person name="Krishnan S.P."/>
            <person name="Kruger A."/>
            <person name="Kummerfeld S.K."/>
            <person name="Kurochkin I.V."/>
            <person name="Lareau L.F."/>
            <person name="Lazarevic D."/>
            <person name="Lipovich L."/>
            <person name="Liu J."/>
            <person name="Liuni S."/>
            <person name="McWilliam S."/>
            <person name="Madan Babu M."/>
            <person name="Madera M."/>
            <person name="Marchionni L."/>
            <person name="Matsuda H."/>
            <person name="Matsuzawa S."/>
            <person name="Miki H."/>
            <person name="Mignone F."/>
            <person name="Miyake S."/>
            <person name="Morris K."/>
            <person name="Mottagui-Tabar S."/>
            <person name="Mulder N."/>
            <person name="Nakano N."/>
            <person name="Nakauchi H."/>
            <person name="Ng P."/>
            <person name="Nilsson R."/>
            <person name="Nishiguchi S."/>
            <person name="Nishikawa S."/>
            <person name="Nori F."/>
            <person name="Ohara O."/>
            <person name="Okazaki Y."/>
            <person name="Orlando V."/>
            <person name="Pang K.C."/>
            <person name="Pavan W.J."/>
            <person name="Pavesi G."/>
            <person name="Pesole G."/>
            <person name="Petrovsky N."/>
            <person name="Piazza S."/>
            <person name="Reed J."/>
            <person name="Reid J.F."/>
            <person name="Ring B.Z."/>
            <person name="Ringwald M."/>
            <person name="Rost B."/>
            <person name="Ruan Y."/>
            <person name="Salzberg S.L."/>
            <person name="Sandelin A."/>
            <person name="Schneider C."/>
            <person name="Schoenbach C."/>
            <person name="Sekiguchi K."/>
            <person name="Semple C.A."/>
            <person name="Seno S."/>
            <person name="Sessa L."/>
            <person name="Sheng Y."/>
            <person name="Shibata Y."/>
            <person name="Shimada H."/>
            <person name="Shimada K."/>
            <person name="Silva D."/>
            <person name="Sinclair B."/>
            <person name="Sperling S."/>
            <person name="Stupka E."/>
            <person name="Sugiura K."/>
            <person name="Sultana R."/>
            <person name="Takenaka Y."/>
            <person name="Taki K."/>
            <person name="Tammoja K."/>
            <person name="Tan S.L."/>
            <person name="Tang S."/>
            <person name="Taylor M.S."/>
            <person name="Tegner J."/>
            <person name="Teichmann S.A."/>
            <person name="Ueda H.R."/>
            <person name="van Nimwegen E."/>
            <person name="Verardo R."/>
            <person name="Wei C.L."/>
            <person name="Yagi K."/>
            <person name="Yamanishi H."/>
            <person name="Zabarovsky E."/>
            <person name="Zhu S."/>
            <person name="Zimmer A."/>
            <person name="Hide W."/>
            <person name="Bult C."/>
            <person name="Grimmond S.M."/>
            <person name="Teasdale R.D."/>
            <person name="Liu E.T."/>
            <person name="Brusic V."/>
            <person name="Quackenbush J."/>
            <person name="Wahlestedt C."/>
            <person name="Mattick J.S."/>
            <person name="Hume D.A."/>
            <person name="Kai C."/>
            <person name="Sasaki D."/>
            <person name="Tomaru Y."/>
            <person name="Fukuda S."/>
            <person name="Kanamori-Katayama M."/>
            <person name="Suzuki M."/>
            <person name="Aoki J."/>
            <person name="Arakawa T."/>
            <person name="Iida J."/>
            <person name="Imamura K."/>
            <person name="Itoh M."/>
            <person name="Kato T."/>
            <person name="Kawaji H."/>
            <person name="Kawagashira N."/>
            <person name="Kawashima T."/>
            <person name="Kojima M."/>
            <person name="Kondo S."/>
            <person name="Konno H."/>
            <person name="Nakano K."/>
            <person name="Ninomiya N."/>
            <person name="Nishio T."/>
            <person name="Okada M."/>
            <person name="Plessy C."/>
            <person name="Shibata K."/>
            <person name="Shiraki T."/>
            <person name="Suzuki S."/>
            <person name="Tagami M."/>
            <person name="Waki K."/>
            <person name="Watahiki A."/>
            <person name="Okamura-Oho Y."/>
            <person name="Suzuki H."/>
            <person name="Kawai J."/>
            <person name="Hayashizaki Y."/>
        </authorList>
    </citation>
    <scope>NUCLEOTIDE SEQUENCE [LARGE SCALE MRNA] (ISOFORM 1)</scope>
    <source>
        <strain>BALB/cJ</strain>
        <strain>C57BL/6J</strain>
        <tissue>Thymus</tissue>
    </source>
</reference>
<reference key="5">
    <citation type="journal article" date="2009" name="PLoS Biol.">
        <title>Lineage-specific biology revealed by a finished genome assembly of the mouse.</title>
        <authorList>
            <person name="Church D.M."/>
            <person name="Goodstadt L."/>
            <person name="Hillier L.W."/>
            <person name="Zody M.C."/>
            <person name="Goldstein S."/>
            <person name="She X."/>
            <person name="Bult C.J."/>
            <person name="Agarwala R."/>
            <person name="Cherry J.L."/>
            <person name="DiCuccio M."/>
            <person name="Hlavina W."/>
            <person name="Kapustin Y."/>
            <person name="Meric P."/>
            <person name="Maglott D."/>
            <person name="Birtle Z."/>
            <person name="Marques A.C."/>
            <person name="Graves T."/>
            <person name="Zhou S."/>
            <person name="Teague B."/>
            <person name="Potamousis K."/>
            <person name="Churas C."/>
            <person name="Place M."/>
            <person name="Herschleb J."/>
            <person name="Runnheim R."/>
            <person name="Forrest D."/>
            <person name="Amos-Landgraf J."/>
            <person name="Schwartz D.C."/>
            <person name="Cheng Z."/>
            <person name="Lindblad-Toh K."/>
            <person name="Eichler E.E."/>
            <person name="Ponting C.P."/>
        </authorList>
    </citation>
    <scope>NUCLEOTIDE SEQUENCE [LARGE SCALE GENOMIC DNA]</scope>
    <source>
        <strain>C57BL/6J</strain>
    </source>
</reference>
<reference key="6">
    <citation type="journal article" date="2004" name="Genome Res.">
        <title>The status, quality, and expansion of the NIH full-length cDNA project: the Mammalian Gene Collection (MGC).</title>
        <authorList>
            <consortium name="The MGC Project Team"/>
        </authorList>
    </citation>
    <scope>NUCLEOTIDE SEQUENCE [LARGE SCALE MRNA] (ISOFORM 1)</scope>
    <source>
        <strain>FVB/N</strain>
        <tissue>Liver</tissue>
    </source>
</reference>
<reference key="7">
    <citation type="journal article" date="2001" name="Blood">
        <title>Modulation of T-cell activation by the glucocorticoid-induced leucine zipper factor via inhibition of nuclear factor kappa B.</title>
        <authorList>
            <person name="Ayroldi E."/>
            <person name="Migliorati G."/>
            <person name="Bruscoli S."/>
            <person name="Marchetti C."/>
            <person name="Zollo O."/>
            <person name="Cannarile L."/>
            <person name="D'Adamio F."/>
            <person name="Riccardi C."/>
        </authorList>
    </citation>
    <scope>TISSUE SPECIFICITY</scope>
</reference>
<reference key="8">
    <citation type="journal article" date="2001" name="J. Biol. Chem.">
        <title>Inhibition of AP-1 by the glucocorticoid-inducible protein GILZ.</title>
        <authorList>
            <person name="Mittelstadt P.R."/>
            <person name="Ashwell J.D."/>
        </authorList>
    </citation>
    <scope>FUNCTION</scope>
    <scope>HOMODIMERIZATION</scope>
    <scope>INTERACTION WITH JUN AND FOS</scope>
</reference>
<reference key="9">
    <citation type="journal article" date="2003" name="Blood">
        <title>Synthesis of glucocorticoid-induced leucine zipper (GILZ) by macrophages: an anti-inflammatory and immunosuppressive mechanism shared by glucocorticoids and IL-10.</title>
        <authorList>
            <person name="Berrebi D."/>
            <person name="Bruscoli S."/>
            <person name="Cohen N."/>
            <person name="Foussat A."/>
            <person name="Migliorati G."/>
            <person name="Bouchet-Delbos L."/>
            <person name="Maillot M.-C."/>
            <person name="Portier A."/>
            <person name="Couderc J."/>
            <person name="Galanaud P."/>
            <person name="Peuchmaur M."/>
            <person name="Riccardi C."/>
            <person name="Emilie D."/>
        </authorList>
    </citation>
    <scope>TISSUE SPECIFICITY</scope>
    <scope>INDUCTION BY DEXAMETHASONE; IL4; IL10 AND IL13</scope>
</reference>
<reference key="10">
    <citation type="journal article" date="2004" name="Blood">
        <title>GILZ, a new target for the transcription factor FoxO3, protects T lymphocytes from interleukin-2 withdrawal-induced apoptosis.</title>
        <authorList>
            <person name="Asselin-Labat M.-L."/>
            <person name="David M."/>
            <person name="Biola-Vidamment A."/>
            <person name="Lecoeuche D."/>
            <person name="Zennaro M.-C."/>
            <person name="Bertoglio J."/>
            <person name="Pallardy M."/>
        </authorList>
    </citation>
    <scope>INDUCTION BY IL2 DEPRIVATION</scope>
</reference>
<reference key="11">
    <citation type="journal article" date="2007" name="FEBS J.">
        <title>Specific TSC22 domain transcripts are hypertonically induced and alternatively spliced to protect mouse kidney cells during osmotic stress.</title>
        <authorList>
            <person name="Fiol D.F."/>
            <person name="Mak S.K."/>
            <person name="Kueltz D."/>
        </authorList>
    </citation>
    <scope>TISSUE SPECIFICITY (ISOFORMS 1 AND 3)</scope>
    <scope>INDUCTION BY HYPEROSMOTIC STRESS AND ALDOSTERONE (ISOFORMS 1 AND 3)</scope>
</reference>
<reference key="12">
    <citation type="journal article" date="2010" name="Cell">
        <title>A tissue-specific atlas of mouse protein phosphorylation and expression.</title>
        <authorList>
            <person name="Huttlin E.L."/>
            <person name="Jedrychowski M.P."/>
            <person name="Elias J.E."/>
            <person name="Goswami T."/>
            <person name="Rad R."/>
            <person name="Beausoleil S.A."/>
            <person name="Villen J."/>
            <person name="Haas W."/>
            <person name="Sowa M.E."/>
            <person name="Gygi S.P."/>
        </authorList>
    </citation>
    <scope>PHOSPHORYLATION [LARGE SCALE ANALYSIS] AT THR-125 AND THR-128</scope>
    <scope>PHOSPHORYLATION [LARGE SCALE ANALYSIS] AT SER-40 (ISOFORM 3)</scope>
    <scope>PHOSPHORYLATION [LARGE SCALE ANALYSIS] AT SER-73 (ISOFORM 4)</scope>
    <scope>IDENTIFICATION BY MASS SPECTROMETRY [LARGE SCALE ANALYSIS]</scope>
    <source>
        <tissue>Brain</tissue>
        <tissue>Heart</tissue>
        <tissue>Testis</tissue>
    </source>
</reference>
<reference key="13">
    <citation type="journal article" date="2016" name="J. Cell. Biochem.">
        <title>TSC-22 Promotes Interleukin-2-Deprivation Induced Apoptosis in T-Lymphocytes.</title>
        <authorList>
            <person name="Pepin A."/>
            <person name="Espinasse M.A."/>
            <person name="Latre de Late P."/>
            <person name="Szely N."/>
            <person name="Pallardy M."/>
            <person name="Biola-Vidamment A."/>
        </authorList>
    </citation>
    <scope>FUNCTION</scope>
    <scope>TISSUE SPECIFICITY</scope>
    <scope>INDUCTION BY IL2 DEPRIVATION</scope>
</reference>
<organism>
    <name type="scientific">Mus musculus</name>
    <name type="common">Mouse</name>
    <dbReference type="NCBI Taxonomy" id="10090"/>
    <lineage>
        <taxon>Eukaryota</taxon>
        <taxon>Metazoa</taxon>
        <taxon>Chordata</taxon>
        <taxon>Craniata</taxon>
        <taxon>Vertebrata</taxon>
        <taxon>Euteleostomi</taxon>
        <taxon>Mammalia</taxon>
        <taxon>Eutheria</taxon>
        <taxon>Euarchontoglires</taxon>
        <taxon>Glires</taxon>
        <taxon>Rodentia</taxon>
        <taxon>Myomorpha</taxon>
        <taxon>Muroidea</taxon>
        <taxon>Muridae</taxon>
        <taxon>Murinae</taxon>
        <taxon>Mus</taxon>
        <taxon>Mus</taxon>
    </lineage>
</organism>
<gene>
    <name evidence="16" type="primary">Tsc22d3</name>
    <name evidence="16" type="synonym">Dsip1</name>
    <name evidence="1" type="synonym">Dsipi</name>
    <name evidence="12" type="synonym">Gilz</name>
</gene>
<protein>
    <recommendedName>
        <fullName evidence="16">TSC22 domain family protein 3</fullName>
    </recommendedName>
    <alternativeName>
        <fullName evidence="12">Glucocorticoid-induced leucine zipper protein</fullName>
    </alternativeName>
    <alternativeName>
        <fullName evidence="11">TSC22-related-inducible leucine zipper 3</fullName>
        <shortName evidence="11">Tilz3</shortName>
    </alternativeName>
</protein>
<sequence length="137" mass="15177">MNTEMYQTPMEVAVYQLHNFSISFFSSLLGGDVVSVKLDNSASGASVVALDNKIEQAMDLVKNHLMYAVREEVEVLKEQIRELLEKNSQLERENTLLKTLASPEQLEKFQSRLSPEEPAPEAPETPETPEAPGGSAV</sequence>
<proteinExistence type="evidence at protein level"/>
<keyword id="KW-0025">Alternative splicing</keyword>
<keyword id="KW-0963">Cytoplasm</keyword>
<keyword id="KW-0539">Nucleus</keyword>
<keyword id="KW-0597">Phosphoprotein</keyword>
<keyword id="KW-1185">Reference proteome</keyword>
<accession>Q9Z2S7</accession>
<accession>B1AVF3</accession>
<accession>C6EX03</accession>
<accession>Q3UNI6</accession>
<accession>Q8K160</accession>
<accession>Q9EQN0</accession>
<accession>Q9EQN1</accession>
<accession>Q9EQN2</accession>
<dbReference type="EMBL" id="AF024519">
    <property type="protein sequence ID" value="AAD01789.1"/>
    <property type="molecule type" value="mRNA"/>
</dbReference>
<dbReference type="EMBL" id="EU818782">
    <property type="protein sequence ID" value="ACJ09091.1"/>
    <property type="molecule type" value="mRNA"/>
</dbReference>
<dbReference type="EMBL" id="AF201287">
    <property type="protein sequence ID" value="AAG41220.1"/>
    <property type="molecule type" value="mRNA"/>
</dbReference>
<dbReference type="EMBL" id="AF201288">
    <property type="protein sequence ID" value="AAG41221.1"/>
    <property type="molecule type" value="mRNA"/>
</dbReference>
<dbReference type="EMBL" id="AF201289">
    <property type="protein sequence ID" value="AAG41222.1"/>
    <property type="molecule type" value="mRNA"/>
</dbReference>
<dbReference type="EMBL" id="AK083389">
    <property type="protein sequence ID" value="BAC38897.1"/>
    <property type="molecule type" value="mRNA"/>
</dbReference>
<dbReference type="EMBL" id="AK144196">
    <property type="protein sequence ID" value="BAE25761.1"/>
    <property type="molecule type" value="mRNA"/>
</dbReference>
<dbReference type="EMBL" id="AL683809">
    <property type="status" value="NOT_ANNOTATED_CDS"/>
    <property type="molecule type" value="Genomic_DNA"/>
</dbReference>
<dbReference type="EMBL" id="BC028813">
    <property type="protein sequence ID" value="AAH28813.1"/>
    <property type="molecule type" value="mRNA"/>
</dbReference>
<dbReference type="CCDS" id="CCDS30440.1">
    <molecule id="Q9Z2S7-1"/>
</dbReference>
<dbReference type="CCDS" id="CCDS41150.1">
    <molecule id="Q9Z2S7-3"/>
</dbReference>
<dbReference type="RefSeq" id="NP_001070832.1">
    <molecule id="Q9Z2S7-3"/>
    <property type="nucleotide sequence ID" value="NM_001077364.2"/>
</dbReference>
<dbReference type="RefSeq" id="NP_034416.3">
    <molecule id="Q9Z2S7-1"/>
    <property type="nucleotide sequence ID" value="NM_010286.4"/>
</dbReference>
<dbReference type="RefSeq" id="XP_006528562.1">
    <molecule id="Q9Z2S7-3"/>
    <property type="nucleotide sequence ID" value="XM_006528499.5"/>
</dbReference>
<dbReference type="RefSeq" id="XP_006528563.1">
    <molecule id="Q9Z2S7-3"/>
    <property type="nucleotide sequence ID" value="XM_006528500.4"/>
</dbReference>
<dbReference type="RefSeq" id="XP_006528564.1">
    <property type="nucleotide sequence ID" value="XM_006528501.3"/>
</dbReference>
<dbReference type="RefSeq" id="XP_006528566.1">
    <molecule id="Q9Z2S7-2"/>
    <property type="nucleotide sequence ID" value="XM_006528503.4"/>
</dbReference>
<dbReference type="RefSeq" id="XP_006528567.1">
    <molecule id="Q9Z2S7-3"/>
    <property type="nucleotide sequence ID" value="XM_006528504.4"/>
</dbReference>
<dbReference type="RefSeq" id="XP_006528568.1">
    <molecule id="Q9Z2S7-3"/>
    <property type="nucleotide sequence ID" value="XM_006528505.5"/>
</dbReference>
<dbReference type="RefSeq" id="XP_036017713.1">
    <molecule id="Q9Z2S7-1"/>
    <property type="nucleotide sequence ID" value="XM_036161820.1"/>
</dbReference>
<dbReference type="SMR" id="Q9Z2S7"/>
<dbReference type="BioGRID" id="199919">
    <property type="interactions" value="5"/>
</dbReference>
<dbReference type="DIP" id="DIP-48844N"/>
<dbReference type="FunCoup" id="Q9Z2S7">
    <property type="interactions" value="767"/>
</dbReference>
<dbReference type="IntAct" id="Q9Z2S7">
    <property type="interactions" value="8"/>
</dbReference>
<dbReference type="STRING" id="10090.ENSMUSP00000108620"/>
<dbReference type="iPTMnet" id="Q9Z2S7"/>
<dbReference type="PhosphoSitePlus" id="Q9Z2S7"/>
<dbReference type="REPRODUCTION-2DPAGE" id="IPI00265379"/>
<dbReference type="jPOST" id="Q9Z2S7"/>
<dbReference type="PaxDb" id="10090-ENSMUSP00000108620"/>
<dbReference type="PeptideAtlas" id="Q9Z2S7"/>
<dbReference type="ProteomicsDB" id="263227">
    <molecule id="Q9Z2S7-1"/>
</dbReference>
<dbReference type="ProteomicsDB" id="263228">
    <molecule id="Q9Z2S7-2"/>
</dbReference>
<dbReference type="ProteomicsDB" id="263229">
    <molecule id="Q9Z2S7-3"/>
</dbReference>
<dbReference type="ProteomicsDB" id="263230">
    <molecule id="Q9Z2S7-4"/>
</dbReference>
<dbReference type="Pumba" id="Q9Z2S7"/>
<dbReference type="Antibodypedia" id="29322">
    <property type="antibodies" value="456 antibodies from 32 providers"/>
</dbReference>
<dbReference type="DNASU" id="14605"/>
<dbReference type="Ensembl" id="ENSMUST00000055738.12">
    <molecule id="Q9Z2S7-1"/>
    <property type="protein sequence ID" value="ENSMUSP00000062589.5"/>
    <property type="gene ID" value="ENSMUSG00000031431.14"/>
</dbReference>
<dbReference type="Ensembl" id="ENSMUST00000112996.9">
    <molecule id="Q9Z2S7-3"/>
    <property type="protein sequence ID" value="ENSMUSP00000108620.3"/>
    <property type="gene ID" value="ENSMUSG00000031431.14"/>
</dbReference>
<dbReference type="GeneID" id="14605"/>
<dbReference type="KEGG" id="mmu:14605"/>
<dbReference type="UCSC" id="uc009ukz.2">
    <molecule id="Q9Z2S7-1"/>
    <property type="organism name" value="mouse"/>
</dbReference>
<dbReference type="UCSC" id="uc009ulb.1">
    <molecule id="Q9Z2S7-3"/>
    <property type="organism name" value="mouse"/>
</dbReference>
<dbReference type="AGR" id="MGI:1196284"/>
<dbReference type="CTD" id="1831"/>
<dbReference type="MGI" id="MGI:1196284">
    <property type="gene designation" value="Tsc22d3"/>
</dbReference>
<dbReference type="VEuPathDB" id="HostDB:ENSMUSG00000031431"/>
<dbReference type="eggNOG" id="KOG4797">
    <property type="taxonomic scope" value="Eukaryota"/>
</dbReference>
<dbReference type="GeneTree" id="ENSGT00940000156656"/>
<dbReference type="HOGENOM" id="CLU_148757_0_0_1"/>
<dbReference type="InParanoid" id="Q9Z2S7"/>
<dbReference type="OMA" id="EMYQSPM"/>
<dbReference type="OrthoDB" id="78650at9989"/>
<dbReference type="PhylomeDB" id="Q9Z2S7"/>
<dbReference type="TreeFam" id="TF329224"/>
<dbReference type="BioGRID-ORCS" id="14605">
    <property type="hits" value="2 hits in 75 CRISPR screens"/>
</dbReference>
<dbReference type="ChiTaRS" id="Tsc22d3">
    <property type="organism name" value="mouse"/>
</dbReference>
<dbReference type="PRO" id="PR:Q9Z2S7"/>
<dbReference type="Proteomes" id="UP000000589">
    <property type="component" value="Chromosome X"/>
</dbReference>
<dbReference type="RNAct" id="Q9Z2S7">
    <property type="molecule type" value="protein"/>
</dbReference>
<dbReference type="Bgee" id="ENSMUSG00000031431">
    <property type="expression patterns" value="Expressed in hindlimb stylopod muscle and 253 other cell types or tissues"/>
</dbReference>
<dbReference type="ExpressionAtlas" id="Q9Z2S7">
    <property type="expression patterns" value="baseline and differential"/>
</dbReference>
<dbReference type="GO" id="GO:0005737">
    <property type="term" value="C:cytoplasm"/>
    <property type="evidence" value="ECO:0000314"/>
    <property type="project" value="MGI"/>
</dbReference>
<dbReference type="GO" id="GO:0005634">
    <property type="term" value="C:nucleus"/>
    <property type="evidence" value="ECO:0000314"/>
    <property type="project" value="MGI"/>
</dbReference>
<dbReference type="GO" id="GO:0043426">
    <property type="term" value="F:MRF binding"/>
    <property type="evidence" value="ECO:0000353"/>
    <property type="project" value="MGI"/>
</dbReference>
<dbReference type="GO" id="GO:0070236">
    <property type="term" value="P:negative regulation of activation-induced cell death of T cells"/>
    <property type="evidence" value="ECO:0000314"/>
    <property type="project" value="MGI"/>
</dbReference>
<dbReference type="GO" id="GO:0048642">
    <property type="term" value="P:negative regulation of skeletal muscle tissue development"/>
    <property type="evidence" value="ECO:0000314"/>
    <property type="project" value="MGI"/>
</dbReference>
<dbReference type="GO" id="GO:0000122">
    <property type="term" value="P:negative regulation of transcription by RNA polymerase II"/>
    <property type="evidence" value="ECO:0000314"/>
    <property type="project" value="MGI"/>
</dbReference>
<dbReference type="GO" id="GO:0006357">
    <property type="term" value="P:regulation of transcription by RNA polymerase II"/>
    <property type="evidence" value="ECO:0007669"/>
    <property type="project" value="InterPro"/>
</dbReference>
<dbReference type="GO" id="GO:0006970">
    <property type="term" value="P:response to osmotic stress"/>
    <property type="evidence" value="ECO:0000314"/>
    <property type="project" value="MGI"/>
</dbReference>
<dbReference type="CDD" id="cd21940">
    <property type="entry name" value="ZIP_TSC22D3"/>
    <property type="match status" value="1"/>
</dbReference>
<dbReference type="FunFam" id="1.20.5.490:FF:000002">
    <property type="entry name" value="TSC22 domain family, member 1"/>
    <property type="match status" value="1"/>
</dbReference>
<dbReference type="Gene3D" id="1.20.5.490">
    <property type="entry name" value="Single helix bin"/>
    <property type="match status" value="1"/>
</dbReference>
<dbReference type="InterPro" id="IPR000580">
    <property type="entry name" value="TSC22/Bun"/>
</dbReference>
<dbReference type="InterPro" id="IPR047862">
    <property type="entry name" value="TSC22/BUN_CS"/>
</dbReference>
<dbReference type="PANTHER" id="PTHR12348">
    <property type="entry name" value="TSC22"/>
    <property type="match status" value="1"/>
</dbReference>
<dbReference type="PANTHER" id="PTHR12348:SF24">
    <property type="entry name" value="TSC22 DOMAIN FAMILY PROTEIN 3"/>
    <property type="match status" value="1"/>
</dbReference>
<dbReference type="Pfam" id="PF01166">
    <property type="entry name" value="TSC22"/>
    <property type="match status" value="1"/>
</dbReference>
<dbReference type="SUPFAM" id="SSF58026">
    <property type="entry name" value="Delta-sleep-inducing peptide immunoreactive peptide"/>
    <property type="match status" value="1"/>
</dbReference>
<dbReference type="PROSITE" id="PS01289">
    <property type="entry name" value="TSC22"/>
    <property type="match status" value="1"/>
</dbReference>
<name>T22D3_MOUSE</name>
<evidence type="ECO:0000250" key="1">
    <source>
        <dbReference type="UniProtKB" id="Q99576"/>
    </source>
</evidence>
<evidence type="ECO:0000256" key="2">
    <source>
        <dbReference type="SAM" id="MobiDB-lite"/>
    </source>
</evidence>
<evidence type="ECO:0000269" key="3">
    <source>
    </source>
</evidence>
<evidence type="ECO:0000269" key="4">
    <source>
    </source>
</evidence>
<evidence type="ECO:0000269" key="5">
    <source>
    </source>
</evidence>
<evidence type="ECO:0000269" key="6">
    <source>
    </source>
</evidence>
<evidence type="ECO:0000269" key="7">
    <source>
    </source>
</evidence>
<evidence type="ECO:0000269" key="8">
    <source>
    </source>
</evidence>
<evidence type="ECO:0000269" key="9">
    <source>
    </source>
</evidence>
<evidence type="ECO:0000269" key="10">
    <source>
    </source>
</evidence>
<evidence type="ECO:0000303" key="11">
    <source>
    </source>
</evidence>
<evidence type="ECO:0000303" key="12">
    <source>
    </source>
</evidence>
<evidence type="ECO:0000303" key="13">
    <source>
    </source>
</evidence>
<evidence type="ECO:0000303" key="14">
    <source ref="3"/>
</evidence>
<evidence type="ECO:0000305" key="15"/>
<evidence type="ECO:0000312" key="16">
    <source>
        <dbReference type="MGI" id="MGI:1196284"/>
    </source>
</evidence>
<evidence type="ECO:0007744" key="17">
    <source>
    </source>
</evidence>